<feature type="chain" id="PRO_0000165061" description="Single-stranded DNA-binding protein">
    <location>
        <begin position="1"/>
        <end position="49" status="greater than"/>
    </location>
</feature>
<feature type="non-terminal residue">
    <location>
        <position position="49"/>
    </location>
</feature>
<organismHost>
    <name type="scientific">Escherichia coli</name>
    <dbReference type="NCBI Taxonomy" id="562"/>
</organismHost>
<reference key="1">
    <citation type="submission" date="1997-11" db="EMBL/GenBank/DDBJ databases">
        <authorList>
            <person name="Theimer C.A."/>
            <person name="Krisch H.M."/>
            <person name="Giedroc D.P."/>
        </authorList>
    </citation>
    <scope>NUCLEOTIDE SEQUENCE [GENOMIC DNA]</scope>
</reference>
<gene>
    <name type="primary">32</name>
    <name type="synonym">ssb</name>
</gene>
<keyword id="KW-0227">DNA damage</keyword>
<keyword id="KW-0233">DNA recombination</keyword>
<keyword id="KW-0234">DNA repair</keyword>
<keyword id="KW-0235">DNA replication</keyword>
<keyword id="KW-0238">DNA-binding</keyword>
<keyword id="KW-0479">Metal-binding</keyword>
<keyword id="KW-0862">Zinc</keyword>
<keyword id="KW-0863">Zinc-finger</keyword>
<proteinExistence type="inferred from homology"/>
<sequence length="49" mass="5314">MFKRKSTAELAAQMAKLAGNKGGFSSEDKGEWKLKLDNAGNGQAVIRFL</sequence>
<name>VHED_BPR32</name>
<dbReference type="EMBL" id="AF033331">
    <property type="protein sequence ID" value="AAB87496.1"/>
    <property type="molecule type" value="Genomic_DNA"/>
</dbReference>
<dbReference type="SMR" id="O21958"/>
<dbReference type="GO" id="GO:0003677">
    <property type="term" value="F:DNA binding"/>
    <property type="evidence" value="ECO:0007669"/>
    <property type="project" value="UniProtKB-KW"/>
</dbReference>
<dbReference type="GO" id="GO:0008270">
    <property type="term" value="F:zinc ion binding"/>
    <property type="evidence" value="ECO:0007669"/>
    <property type="project" value="UniProtKB-KW"/>
</dbReference>
<dbReference type="GO" id="GO:0006310">
    <property type="term" value="P:DNA recombination"/>
    <property type="evidence" value="ECO:0007669"/>
    <property type="project" value="UniProtKB-KW"/>
</dbReference>
<dbReference type="GO" id="GO:0006281">
    <property type="term" value="P:DNA repair"/>
    <property type="evidence" value="ECO:0007669"/>
    <property type="project" value="UniProtKB-KW"/>
</dbReference>
<dbReference type="GO" id="GO:0006260">
    <property type="term" value="P:DNA replication"/>
    <property type="evidence" value="ECO:0007669"/>
    <property type="project" value="UniProtKB-KW"/>
</dbReference>
<dbReference type="Gene3D" id="3.90.198.10">
    <property type="entry name" value="Replication Fork Single-Stranded Dna Binding Protein"/>
    <property type="match status" value="1"/>
</dbReference>
<dbReference type="InterPro" id="IPR012340">
    <property type="entry name" value="NA-bd_OB-fold"/>
</dbReference>
<dbReference type="InterPro" id="IPR044947">
    <property type="entry name" value="Phage_T4_Gp32_ssDNA-bd_sf"/>
</dbReference>
<dbReference type="SUPFAM" id="SSF50249">
    <property type="entry name" value="Nucleic acid-binding proteins"/>
    <property type="match status" value="1"/>
</dbReference>
<comment type="function">
    <text>Binds preferentially to single-stranded DNA and therefore, destabilizes double-stranded DNA. It is involved in DNA replication, repair and recombination. Binds ss-DNA as the replication fork advances and stimulates the replisome processivity and accuracy.</text>
</comment>
<comment type="subunit">
    <text evidence="1">Homodimer in the absence of DNA, monomer when binding DNA.</text>
</comment>
<comment type="miscellaneous">
    <text evidence="1">Interacts with the polymerase and the uvsX and uvsY proteins.</text>
</comment>
<accession>O21958</accession>
<evidence type="ECO:0000250" key="1"/>
<organism>
    <name type="scientific">Enterobacteria phage RB32</name>
    <name type="common">Bacteriophage RB32</name>
    <dbReference type="NCBI Taxonomy" id="45406"/>
    <lineage>
        <taxon>Viruses</taxon>
        <taxon>Duplodnaviria</taxon>
        <taxon>Heunggongvirae</taxon>
        <taxon>Uroviricota</taxon>
        <taxon>Caudoviricetes</taxon>
        <taxon>Straboviridae</taxon>
        <taxon>Tevenvirinae</taxon>
        <taxon>Tequatrovirus</taxon>
    </lineage>
</organism>
<protein>
    <recommendedName>
        <fullName>Single-stranded DNA-binding protein</fullName>
    </recommendedName>
    <alternativeName>
        <fullName>Gp32</fullName>
    </alternativeName>
    <alternativeName>
        <fullName>Helix-destabilizing protein</fullName>
    </alternativeName>
</protein>